<evidence type="ECO:0000255" key="1">
    <source>
        <dbReference type="HAMAP-Rule" id="MF_01800"/>
    </source>
</evidence>
<sequence>MIERGKFRSLTLVNWNGFFARTFDLDELVTTLSGGNGAGKSTTMAAFITALIPDLTLLHFRNTTEAGATSGSRDKGLHGKLRAGVCYSTLDVVNSRHQRVLVGVRLQQVAGRDRKVDIKPFTIQGLPTAIQPTQILTQVVGDRQARVLSLQELKDRVEEMEGVQFKQFNSITDYHSLMFDLGVVPRRLRSASDRSKFYRLIEASLYGGISSAITRSLRDYLLPENSGVRKAFQDMEAALRENRMTLEAIRVTQSDRDLFKHLISEATSYVAADYMRHANERRIHLDGALELRRDLFSSRKQLSSEQYRHVEMARELAEQSGAEGDLETDYQAASDHLNLVQTAMRQQEKIERYNADLEELSYRLEEQNEVVEEAREQQAENEERADAAELEVDELKSQLADYQQALDVQQTRAIQYQQAQQALERARTLCQLPDLTADNADEWLDSYQAKEQEATEILLMLEQKLSVADAAHGQFEQAYQLVSKIAGAVNRNEAWQVARDLLRDSSSQRYQAERVQPLRMRLSELEQRLREQQDAERLLQDFSKRNGQDYQPEELESLQQELDARIETLSSLVAEAGERRMALRQELEQIQLRIQKLTTRAPVWLAAQEMLTQLSEQSGETFEDSRQVTEFMQQLLERERETTVERDDIASRKRQIEAQIERLSQPGGSEDPRLNALAERFGGVLLSEIYDDVTLDDAPYFSALYGPSRHAIVVADLSLVREQLAGLEDCPEDLYLIEGDPQSFDDSVFAVEELERAVVVKVAERQWRYSRFPEVPLFGRAAREMRLESLRDEREALAEQYATLSFDVQKTQRLHQSFSRFIGTHLAVVFDEDPEAEIRTLSSRRGELDRAIASFDGENQQQRQQYEQAKEASVQLNKLIPRISLLCDETLQDRVEEIRAELDETEESARFIQQHGATLVKLEPLVSVLQSDPQQHEQLQEDYAQAQNAQRQAKQQAFALTEVVQRRAHFSYADSAGMLGENAGLNDKLRHRLELAEAERTKAREQLRQHQAQLTQYSQVQASLKSSYDAKQDMLKELTQELQDIGVRADADAEERARQRRDELHAALSTNRSRRNQLEKQITFCEAEMDSLQKKLRKLERDYHQMREQVVTAKAGWCAVMRLVKDNGVERRLHRRELAYMEGDELRSMSDKALGALRLAVADNEHLRDVLRLSEDPKRPERKIQFYIAVYQHLRERIRQDIIRTDDPVEAIEQMEIELNRLTEELTAREQMLAISSRSVANIIRKTIQREQNRIRMLNQGLQAVAFGQVKSVRLNVNVRETHTTLLNVLSEQQEMHQDLFNSNRLTFSEALAKLYQRLNPEIDMGQRTPQTIGEELLDYRNYLEMEVEVNRGADGWLRAESGALSTGEAIGTGMSILVMVVQSWEEESKRLRGKDIIPCRLLFLDEAARLDAKSIATLFELCDRLEMQLVIAAPENISPEKGTTYKLVRKVYQNNEHVHVVGLRGFGAEAPDTQEQAS</sequence>
<proteinExistence type="inferred from homology"/>
<protein>
    <recommendedName>
        <fullName evidence="1">Chromosome partition protein MukB</fullName>
    </recommendedName>
    <alternativeName>
        <fullName evidence="1">Structural maintenance of chromosome-related protein</fullName>
    </alternativeName>
</protein>
<reference key="1">
    <citation type="submission" date="2009-07" db="EMBL/GenBank/DDBJ databases">
        <title>Complete sequence of Pectobacterium carotovorum subsp. carotovorum PC1.</title>
        <authorList>
            <consortium name="US DOE Joint Genome Institute"/>
            <person name="Lucas S."/>
            <person name="Copeland A."/>
            <person name="Lapidus A."/>
            <person name="Glavina del Rio T."/>
            <person name="Tice H."/>
            <person name="Bruce D."/>
            <person name="Goodwin L."/>
            <person name="Pitluck S."/>
            <person name="Munk A.C."/>
            <person name="Brettin T."/>
            <person name="Detter J.C."/>
            <person name="Han C."/>
            <person name="Tapia R."/>
            <person name="Larimer F."/>
            <person name="Land M."/>
            <person name="Hauser L."/>
            <person name="Kyrpides N."/>
            <person name="Mikhailova N."/>
            <person name="Balakrishnan V."/>
            <person name="Glasner J."/>
            <person name="Perna N.T."/>
        </authorList>
    </citation>
    <scope>NUCLEOTIDE SEQUENCE [LARGE SCALE GENOMIC DNA]</scope>
    <source>
        <strain>PC1</strain>
    </source>
</reference>
<name>MUKB_PECCP</name>
<keyword id="KW-0067">ATP-binding</keyword>
<keyword id="KW-0131">Cell cycle</keyword>
<keyword id="KW-0132">Cell division</keyword>
<keyword id="KW-0159">Chromosome partition</keyword>
<keyword id="KW-0175">Coiled coil</keyword>
<keyword id="KW-0963">Cytoplasm</keyword>
<keyword id="KW-0226">DNA condensation</keyword>
<keyword id="KW-0238">DNA-binding</keyword>
<keyword id="KW-0547">Nucleotide-binding</keyword>
<accession>C6DFB1</accession>
<gene>
    <name evidence="1" type="primary">mukB</name>
    <name type="ordered locus">PC1_1779</name>
</gene>
<organism>
    <name type="scientific">Pectobacterium carotovorum subsp. carotovorum (strain PC1)</name>
    <dbReference type="NCBI Taxonomy" id="561230"/>
    <lineage>
        <taxon>Bacteria</taxon>
        <taxon>Pseudomonadati</taxon>
        <taxon>Pseudomonadota</taxon>
        <taxon>Gammaproteobacteria</taxon>
        <taxon>Enterobacterales</taxon>
        <taxon>Pectobacteriaceae</taxon>
        <taxon>Pectobacterium</taxon>
    </lineage>
</organism>
<comment type="function">
    <text evidence="1">Plays a central role in chromosome condensation, segregation and cell cycle progression. Functions as a homodimer, which is essential for chromosome partition. Involved in negative DNA supercoiling in vivo, and by this means organize and compact chromosomes. May achieve or facilitate chromosome segregation by condensation DNA from both sides of a centrally located replisome during cell division.</text>
</comment>
<comment type="subunit">
    <text evidence="1">Homodimerization via its hinge domain. Binds to DNA via its C-terminal region. Interacts, and probably forms a ternary complex, with MukE and MukF via its C-terminal region. The complex formation is stimulated by calcium or magnesium. Interacts with tubulin-related protein FtsZ.</text>
</comment>
<comment type="subcellular location">
    <subcellularLocation>
        <location evidence="1">Cytoplasm</location>
        <location evidence="1">Nucleoid</location>
    </subcellularLocation>
    <text evidence="1">Restricted to the nucleoid region.</text>
</comment>
<comment type="domain">
    <text evidence="1">The hinge domain, which separates the large intramolecular coiled coil regions, allows the homodimerization, forming a V-shaped homodimer.</text>
</comment>
<comment type="similarity">
    <text evidence="1">Belongs to the SMC family. MukB subfamily.</text>
</comment>
<dbReference type="EMBL" id="CP001657">
    <property type="protein sequence ID" value="ACT12820.1"/>
    <property type="molecule type" value="Genomic_DNA"/>
</dbReference>
<dbReference type="RefSeq" id="WP_015840027.1">
    <property type="nucleotide sequence ID" value="NC_012917.1"/>
</dbReference>
<dbReference type="SMR" id="C6DFB1"/>
<dbReference type="STRING" id="561230.PC1_1779"/>
<dbReference type="KEGG" id="pct:PC1_1779"/>
<dbReference type="eggNOG" id="COG3096">
    <property type="taxonomic scope" value="Bacteria"/>
</dbReference>
<dbReference type="HOGENOM" id="CLU_004430_0_0_6"/>
<dbReference type="OrthoDB" id="6722439at2"/>
<dbReference type="Proteomes" id="UP000002736">
    <property type="component" value="Chromosome"/>
</dbReference>
<dbReference type="GO" id="GO:0005737">
    <property type="term" value="C:cytoplasm"/>
    <property type="evidence" value="ECO:0007669"/>
    <property type="project" value="UniProtKB-UniRule"/>
</dbReference>
<dbReference type="GO" id="GO:0009295">
    <property type="term" value="C:nucleoid"/>
    <property type="evidence" value="ECO:0007669"/>
    <property type="project" value="UniProtKB-SubCell"/>
</dbReference>
<dbReference type="GO" id="GO:0005524">
    <property type="term" value="F:ATP binding"/>
    <property type="evidence" value="ECO:0007669"/>
    <property type="project" value="UniProtKB-UniRule"/>
</dbReference>
<dbReference type="GO" id="GO:0003677">
    <property type="term" value="F:DNA binding"/>
    <property type="evidence" value="ECO:0007669"/>
    <property type="project" value="UniProtKB-UniRule"/>
</dbReference>
<dbReference type="GO" id="GO:0051301">
    <property type="term" value="P:cell division"/>
    <property type="evidence" value="ECO:0007669"/>
    <property type="project" value="UniProtKB-KW"/>
</dbReference>
<dbReference type="GO" id="GO:0030261">
    <property type="term" value="P:chromosome condensation"/>
    <property type="evidence" value="ECO:0007669"/>
    <property type="project" value="UniProtKB-KW"/>
</dbReference>
<dbReference type="GO" id="GO:0007059">
    <property type="term" value="P:chromosome segregation"/>
    <property type="evidence" value="ECO:0007669"/>
    <property type="project" value="UniProtKB-UniRule"/>
</dbReference>
<dbReference type="GO" id="GO:0006260">
    <property type="term" value="P:DNA replication"/>
    <property type="evidence" value="ECO:0007669"/>
    <property type="project" value="UniProtKB-UniRule"/>
</dbReference>
<dbReference type="FunFam" id="3.30.70.3500:FF:000001">
    <property type="entry name" value="Chromosome partition protein MukB"/>
    <property type="match status" value="1"/>
</dbReference>
<dbReference type="FunFam" id="3.40.1140.10:FF:000002">
    <property type="entry name" value="Chromosome partition protein MukB"/>
    <property type="match status" value="1"/>
</dbReference>
<dbReference type="Gene3D" id="1.20.58.850">
    <property type="match status" value="1"/>
</dbReference>
<dbReference type="Gene3D" id="3.40.1140.10">
    <property type="match status" value="2"/>
</dbReference>
<dbReference type="Gene3D" id="1.20.5.420">
    <property type="entry name" value="Immunoglobulin FC, subunit C"/>
    <property type="match status" value="1"/>
</dbReference>
<dbReference type="Gene3D" id="3.30.70.3500">
    <property type="entry name" value="MukB, hinge domain"/>
    <property type="match status" value="1"/>
</dbReference>
<dbReference type="HAMAP" id="MF_01800">
    <property type="entry name" value="MukB"/>
    <property type="match status" value="1"/>
</dbReference>
<dbReference type="InterPro" id="IPR012090">
    <property type="entry name" value="MukB"/>
</dbReference>
<dbReference type="InterPro" id="IPR050308">
    <property type="entry name" value="MukB/SMC"/>
</dbReference>
<dbReference type="InterPro" id="IPR032520">
    <property type="entry name" value="MukB_hinge"/>
</dbReference>
<dbReference type="InterPro" id="IPR042501">
    <property type="entry name" value="MukB_hinge_sf"/>
</dbReference>
<dbReference type="InterPro" id="IPR007406">
    <property type="entry name" value="MukB_N_dom"/>
</dbReference>
<dbReference type="InterPro" id="IPR027417">
    <property type="entry name" value="P-loop_NTPase"/>
</dbReference>
<dbReference type="NCBIfam" id="NF003422">
    <property type="entry name" value="PRK04863.1"/>
    <property type="match status" value="1"/>
</dbReference>
<dbReference type="PANTHER" id="PTHR42963">
    <property type="entry name" value="CHROMOSOME PARTITION PROTEIN MUKB"/>
    <property type="match status" value="1"/>
</dbReference>
<dbReference type="PANTHER" id="PTHR42963:SF1">
    <property type="entry name" value="DUF4476 DOMAIN-CONTAINING PROTEIN"/>
    <property type="match status" value="1"/>
</dbReference>
<dbReference type="Pfam" id="PF04310">
    <property type="entry name" value="MukB"/>
    <property type="match status" value="1"/>
</dbReference>
<dbReference type="Pfam" id="PF16330">
    <property type="entry name" value="MukB_hinge"/>
    <property type="match status" value="1"/>
</dbReference>
<dbReference type="Pfam" id="PF13558">
    <property type="entry name" value="SbcC_Walker_B"/>
    <property type="match status" value="1"/>
</dbReference>
<dbReference type="PIRSF" id="PIRSF005246">
    <property type="entry name" value="MukB"/>
    <property type="match status" value="1"/>
</dbReference>
<dbReference type="SUPFAM" id="SSF52540">
    <property type="entry name" value="P-loop containing nucleoside triphosphate hydrolases"/>
    <property type="match status" value="1"/>
</dbReference>
<feature type="chain" id="PRO_1000215937" description="Chromosome partition protein MukB">
    <location>
        <begin position="1"/>
        <end position="1479"/>
    </location>
</feature>
<feature type="region of interest" description="Flexible hinge" evidence="1">
    <location>
        <begin position="666"/>
        <end position="783"/>
    </location>
</feature>
<feature type="coiled-coil region" evidence="1">
    <location>
        <begin position="337"/>
        <end position="418"/>
    </location>
</feature>
<feature type="coiled-coil region" evidence="1">
    <location>
        <begin position="511"/>
        <end position="603"/>
    </location>
</feature>
<feature type="coiled-coil region" evidence="1">
    <location>
        <begin position="780"/>
        <end position="810"/>
    </location>
</feature>
<feature type="coiled-coil region" evidence="1">
    <location>
        <begin position="847"/>
        <end position="1116"/>
    </location>
</feature>
<feature type="coiled-coil region" evidence="1">
    <location>
        <begin position="1206"/>
        <end position="1265"/>
    </location>
</feature>
<feature type="binding site" evidence="1">
    <location>
        <begin position="34"/>
        <end position="41"/>
    </location>
    <ligand>
        <name>ATP</name>
        <dbReference type="ChEBI" id="CHEBI:30616"/>
    </ligand>
</feature>